<gene>
    <name evidence="1" type="primary">rex</name>
    <name type="ordered locus">CLK_2722</name>
</gene>
<proteinExistence type="inferred from homology"/>
<protein>
    <recommendedName>
        <fullName evidence="1">Redox-sensing transcriptional repressor Rex</fullName>
    </recommendedName>
</protein>
<name>REX_CLOBM</name>
<feature type="chain" id="PRO_1000137324" description="Redox-sensing transcriptional repressor Rex">
    <location>
        <begin position="1"/>
        <end position="210"/>
    </location>
</feature>
<feature type="DNA-binding region" description="H-T-H motif" evidence="1">
    <location>
        <begin position="17"/>
        <end position="56"/>
    </location>
</feature>
<feature type="binding site" evidence="1">
    <location>
        <begin position="91"/>
        <end position="96"/>
    </location>
    <ligand>
        <name>NAD(+)</name>
        <dbReference type="ChEBI" id="CHEBI:57540"/>
    </ligand>
</feature>
<dbReference type="EMBL" id="CP000962">
    <property type="protein sequence ID" value="ACA55507.1"/>
    <property type="molecule type" value="Genomic_DNA"/>
</dbReference>
<dbReference type="RefSeq" id="WP_012343478.1">
    <property type="nucleotide sequence ID" value="NC_010520.1"/>
</dbReference>
<dbReference type="SMR" id="B1L1Y6"/>
<dbReference type="KEGG" id="cbl:CLK_2722"/>
<dbReference type="HOGENOM" id="CLU_061534_1_0_9"/>
<dbReference type="GO" id="GO:0005737">
    <property type="term" value="C:cytoplasm"/>
    <property type="evidence" value="ECO:0007669"/>
    <property type="project" value="UniProtKB-SubCell"/>
</dbReference>
<dbReference type="GO" id="GO:0003677">
    <property type="term" value="F:DNA binding"/>
    <property type="evidence" value="ECO:0007669"/>
    <property type="project" value="UniProtKB-UniRule"/>
</dbReference>
<dbReference type="GO" id="GO:0003700">
    <property type="term" value="F:DNA-binding transcription factor activity"/>
    <property type="evidence" value="ECO:0007669"/>
    <property type="project" value="UniProtKB-UniRule"/>
</dbReference>
<dbReference type="GO" id="GO:0045892">
    <property type="term" value="P:negative regulation of DNA-templated transcription"/>
    <property type="evidence" value="ECO:0007669"/>
    <property type="project" value="InterPro"/>
</dbReference>
<dbReference type="GO" id="GO:0051775">
    <property type="term" value="P:response to redox state"/>
    <property type="evidence" value="ECO:0007669"/>
    <property type="project" value="InterPro"/>
</dbReference>
<dbReference type="Gene3D" id="3.40.50.720">
    <property type="entry name" value="NAD(P)-binding Rossmann-like Domain"/>
    <property type="match status" value="1"/>
</dbReference>
<dbReference type="Gene3D" id="1.10.10.10">
    <property type="entry name" value="Winged helix-like DNA-binding domain superfamily/Winged helix DNA-binding domain"/>
    <property type="match status" value="1"/>
</dbReference>
<dbReference type="HAMAP" id="MF_01131">
    <property type="entry name" value="Rex"/>
    <property type="match status" value="1"/>
</dbReference>
<dbReference type="InterPro" id="IPR003781">
    <property type="entry name" value="CoA-bd"/>
</dbReference>
<dbReference type="InterPro" id="IPR036291">
    <property type="entry name" value="NAD(P)-bd_dom_sf"/>
</dbReference>
<dbReference type="InterPro" id="IPR009718">
    <property type="entry name" value="Rex_DNA-bd_C_dom"/>
</dbReference>
<dbReference type="InterPro" id="IPR022876">
    <property type="entry name" value="Tscrpt_rep_Rex"/>
</dbReference>
<dbReference type="InterPro" id="IPR036388">
    <property type="entry name" value="WH-like_DNA-bd_sf"/>
</dbReference>
<dbReference type="InterPro" id="IPR036390">
    <property type="entry name" value="WH_DNA-bd_sf"/>
</dbReference>
<dbReference type="NCBIfam" id="NF003989">
    <property type="entry name" value="PRK05472.1-3"/>
    <property type="match status" value="1"/>
</dbReference>
<dbReference type="NCBIfam" id="NF003990">
    <property type="entry name" value="PRK05472.1-4"/>
    <property type="match status" value="1"/>
</dbReference>
<dbReference type="NCBIfam" id="NF003993">
    <property type="entry name" value="PRK05472.2-2"/>
    <property type="match status" value="1"/>
</dbReference>
<dbReference type="NCBIfam" id="NF003994">
    <property type="entry name" value="PRK05472.2-3"/>
    <property type="match status" value="1"/>
</dbReference>
<dbReference type="NCBIfam" id="NF003995">
    <property type="entry name" value="PRK05472.2-4"/>
    <property type="match status" value="1"/>
</dbReference>
<dbReference type="NCBIfam" id="NF003996">
    <property type="entry name" value="PRK05472.2-5"/>
    <property type="match status" value="1"/>
</dbReference>
<dbReference type="PANTHER" id="PTHR35786">
    <property type="entry name" value="REDOX-SENSING TRANSCRIPTIONAL REPRESSOR REX"/>
    <property type="match status" value="1"/>
</dbReference>
<dbReference type="PANTHER" id="PTHR35786:SF1">
    <property type="entry name" value="REDOX-SENSING TRANSCRIPTIONAL REPRESSOR REX 1"/>
    <property type="match status" value="1"/>
</dbReference>
<dbReference type="Pfam" id="PF02629">
    <property type="entry name" value="CoA_binding"/>
    <property type="match status" value="1"/>
</dbReference>
<dbReference type="Pfam" id="PF06971">
    <property type="entry name" value="Put_DNA-bind_N"/>
    <property type="match status" value="1"/>
</dbReference>
<dbReference type="SMART" id="SM00881">
    <property type="entry name" value="CoA_binding"/>
    <property type="match status" value="1"/>
</dbReference>
<dbReference type="SUPFAM" id="SSF51735">
    <property type="entry name" value="NAD(P)-binding Rossmann-fold domains"/>
    <property type="match status" value="1"/>
</dbReference>
<dbReference type="SUPFAM" id="SSF46785">
    <property type="entry name" value="Winged helix' DNA-binding domain"/>
    <property type="match status" value="1"/>
</dbReference>
<reference key="1">
    <citation type="journal article" date="2007" name="PLoS ONE">
        <title>Analysis of the neurotoxin complex genes in Clostridium botulinum A1-A4 and B1 strains: BoNT/A3, /Ba4 and /B1 clusters are located within plasmids.</title>
        <authorList>
            <person name="Smith T.J."/>
            <person name="Hill K.K."/>
            <person name="Foley B.T."/>
            <person name="Detter J.C."/>
            <person name="Munk A.C."/>
            <person name="Bruce D.C."/>
            <person name="Doggett N.A."/>
            <person name="Smith L.A."/>
            <person name="Marks J.D."/>
            <person name="Xie G."/>
            <person name="Brettin T.S."/>
        </authorList>
    </citation>
    <scope>NUCLEOTIDE SEQUENCE [LARGE SCALE GENOMIC DNA]</scope>
    <source>
        <strain>Loch Maree / Type A3</strain>
    </source>
</reference>
<sequence length="210" mass="23784">MDKKKNISMAVIRRLPKYHRYLYELLKNDVDRISSKELSEKIGFTASQIRQDLNCFGDFGQQGYGYNVSELHHQISNILGLNNPYNIIIIGAGNIGQALANYTRFSKLGFNVKTMFDTNPKLIGLKIREIEILDIDYLSSYLEKNNIDIGIICVPHDNAQKVANILVKNDIKGIWNFAPIDLSVPEDVVVENVHLSDSLLTLTCLINKTE</sequence>
<comment type="function">
    <text evidence="1">Modulates transcription in response to changes in cellular NADH/NAD(+) redox state.</text>
</comment>
<comment type="subunit">
    <text evidence="1">Homodimer.</text>
</comment>
<comment type="subcellular location">
    <subcellularLocation>
        <location evidence="1">Cytoplasm</location>
    </subcellularLocation>
</comment>
<comment type="similarity">
    <text evidence="1">Belongs to the transcriptional regulatory Rex family.</text>
</comment>
<evidence type="ECO:0000255" key="1">
    <source>
        <dbReference type="HAMAP-Rule" id="MF_01131"/>
    </source>
</evidence>
<organism>
    <name type="scientific">Clostridium botulinum (strain Loch Maree / Type A3)</name>
    <dbReference type="NCBI Taxonomy" id="498214"/>
    <lineage>
        <taxon>Bacteria</taxon>
        <taxon>Bacillati</taxon>
        <taxon>Bacillota</taxon>
        <taxon>Clostridia</taxon>
        <taxon>Eubacteriales</taxon>
        <taxon>Clostridiaceae</taxon>
        <taxon>Clostridium</taxon>
    </lineage>
</organism>
<keyword id="KW-0963">Cytoplasm</keyword>
<keyword id="KW-0238">DNA-binding</keyword>
<keyword id="KW-0520">NAD</keyword>
<keyword id="KW-0678">Repressor</keyword>
<keyword id="KW-0804">Transcription</keyword>
<keyword id="KW-0805">Transcription regulation</keyword>
<accession>B1L1Y6</accession>